<dbReference type="EMBL" id="CU329670">
    <property type="protein sequence ID" value="CAA93895.1"/>
    <property type="molecule type" value="Genomic_DNA"/>
</dbReference>
<dbReference type="PIR" id="T38165">
    <property type="entry name" value="T38165"/>
</dbReference>
<dbReference type="RefSeq" id="NP_594834.1">
    <property type="nucleotide sequence ID" value="NM_001020263.2"/>
</dbReference>
<dbReference type="BioGRID" id="278326">
    <property type="interactions" value="4"/>
</dbReference>
<dbReference type="FunCoup" id="Q10360">
    <property type="interactions" value="59"/>
</dbReference>
<dbReference type="STRING" id="284812.Q10360"/>
<dbReference type="PaxDb" id="4896-SPAC22E12.08.1"/>
<dbReference type="EnsemblFungi" id="SPAC22E12.08.1">
    <property type="protein sequence ID" value="SPAC22E12.08.1:pep"/>
    <property type="gene ID" value="SPAC22E12.08"/>
</dbReference>
<dbReference type="GeneID" id="2541835"/>
<dbReference type="KEGG" id="spo:2541835"/>
<dbReference type="PomBase" id="SPAC22E12.08">
    <property type="gene designation" value="rrn10"/>
</dbReference>
<dbReference type="VEuPathDB" id="FungiDB:SPAC22E12.08"/>
<dbReference type="HOGENOM" id="CLU_2347904_0_0_1"/>
<dbReference type="InParanoid" id="Q10360"/>
<dbReference type="OMA" id="ATEYMLA"/>
<dbReference type="PRO" id="PR:Q10360"/>
<dbReference type="Proteomes" id="UP000002485">
    <property type="component" value="Chromosome I"/>
</dbReference>
<dbReference type="GO" id="GO:0005829">
    <property type="term" value="C:cytosol"/>
    <property type="evidence" value="ECO:0007005"/>
    <property type="project" value="PomBase"/>
</dbReference>
<dbReference type="GO" id="GO:0005634">
    <property type="term" value="C:nucleus"/>
    <property type="evidence" value="ECO:0007005"/>
    <property type="project" value="PomBase"/>
</dbReference>
<dbReference type="GO" id="GO:0000500">
    <property type="term" value="C:RNA polymerase I upstream activating factor complex"/>
    <property type="evidence" value="ECO:0000269"/>
    <property type="project" value="PomBase"/>
</dbReference>
<dbReference type="GO" id="GO:0006361">
    <property type="term" value="P:transcription initiation at RNA polymerase I promoter"/>
    <property type="evidence" value="ECO:0000315"/>
    <property type="project" value="PomBase"/>
</dbReference>
<dbReference type="InterPro" id="IPR022793">
    <property type="entry name" value="Rrn10"/>
</dbReference>
<dbReference type="Pfam" id="PF05234">
    <property type="entry name" value="UAF_Rrn10"/>
    <property type="match status" value="1"/>
</dbReference>
<name>RRN10_SCHPO</name>
<evidence type="ECO:0000269" key="1">
    <source>
    </source>
</evidence>
<evidence type="ECO:0000269" key="2">
    <source>
    </source>
</evidence>
<accession>Q10360</accession>
<organism>
    <name type="scientific">Schizosaccharomyces pombe (strain 972 / ATCC 24843)</name>
    <name type="common">Fission yeast</name>
    <dbReference type="NCBI Taxonomy" id="284812"/>
    <lineage>
        <taxon>Eukaryota</taxon>
        <taxon>Fungi</taxon>
        <taxon>Dikarya</taxon>
        <taxon>Ascomycota</taxon>
        <taxon>Taphrinomycotina</taxon>
        <taxon>Schizosaccharomycetes</taxon>
        <taxon>Schizosaccharomycetales</taxon>
        <taxon>Schizosaccharomycetaceae</taxon>
        <taxon>Schizosaccharomyces</taxon>
    </lineage>
</organism>
<sequence length="97" mass="11013">MSNPPTRPTLYNLVNADGELSYRARDLVQDFSVPIPHELPDPDLVHSIQDFATEYMLATGKKSFECLDESALLGLGYLVTEWMDAMVTDCLEEFEER</sequence>
<protein>
    <recommendedName>
        <fullName>RNA polymerase I-specific transcription initiation factor rrn10</fullName>
    </recommendedName>
</protein>
<feature type="chain" id="PRO_0000116604" description="RNA polymerase I-specific transcription initiation factor rrn10">
    <location>
        <begin position="1"/>
        <end position="97"/>
    </location>
</feature>
<gene>
    <name type="primary">rrn10</name>
    <name type="ORF">SPAC22E12.08</name>
</gene>
<keyword id="KW-0963">Cytoplasm</keyword>
<keyword id="KW-0539">Nucleus</keyword>
<keyword id="KW-1185">Reference proteome</keyword>
<keyword id="KW-0804">Transcription</keyword>
<keyword id="KW-0805">Transcription regulation</keyword>
<reference key="1">
    <citation type="journal article" date="2002" name="Nature">
        <title>The genome sequence of Schizosaccharomyces pombe.</title>
        <authorList>
            <person name="Wood V."/>
            <person name="Gwilliam R."/>
            <person name="Rajandream M.A."/>
            <person name="Lyne M.H."/>
            <person name="Lyne R."/>
            <person name="Stewart A."/>
            <person name="Sgouros J.G."/>
            <person name="Peat N."/>
            <person name="Hayles J."/>
            <person name="Baker S.G."/>
            <person name="Basham D."/>
            <person name="Bowman S."/>
            <person name="Brooks K."/>
            <person name="Brown D."/>
            <person name="Brown S."/>
            <person name="Chillingworth T."/>
            <person name="Churcher C.M."/>
            <person name="Collins M."/>
            <person name="Connor R."/>
            <person name="Cronin A."/>
            <person name="Davis P."/>
            <person name="Feltwell T."/>
            <person name="Fraser A."/>
            <person name="Gentles S."/>
            <person name="Goble A."/>
            <person name="Hamlin N."/>
            <person name="Harris D.E."/>
            <person name="Hidalgo J."/>
            <person name="Hodgson G."/>
            <person name="Holroyd S."/>
            <person name="Hornsby T."/>
            <person name="Howarth S."/>
            <person name="Huckle E.J."/>
            <person name="Hunt S."/>
            <person name="Jagels K."/>
            <person name="James K.D."/>
            <person name="Jones L."/>
            <person name="Jones M."/>
            <person name="Leather S."/>
            <person name="McDonald S."/>
            <person name="McLean J."/>
            <person name="Mooney P."/>
            <person name="Moule S."/>
            <person name="Mungall K.L."/>
            <person name="Murphy L.D."/>
            <person name="Niblett D."/>
            <person name="Odell C."/>
            <person name="Oliver K."/>
            <person name="O'Neil S."/>
            <person name="Pearson D."/>
            <person name="Quail M.A."/>
            <person name="Rabbinowitsch E."/>
            <person name="Rutherford K.M."/>
            <person name="Rutter S."/>
            <person name="Saunders D."/>
            <person name="Seeger K."/>
            <person name="Sharp S."/>
            <person name="Skelton J."/>
            <person name="Simmonds M.N."/>
            <person name="Squares R."/>
            <person name="Squares S."/>
            <person name="Stevens K."/>
            <person name="Taylor K."/>
            <person name="Taylor R.G."/>
            <person name="Tivey A."/>
            <person name="Walsh S.V."/>
            <person name="Warren T."/>
            <person name="Whitehead S."/>
            <person name="Woodward J.R."/>
            <person name="Volckaert G."/>
            <person name="Aert R."/>
            <person name="Robben J."/>
            <person name="Grymonprez B."/>
            <person name="Weltjens I."/>
            <person name="Vanstreels E."/>
            <person name="Rieger M."/>
            <person name="Schaefer M."/>
            <person name="Mueller-Auer S."/>
            <person name="Gabel C."/>
            <person name="Fuchs M."/>
            <person name="Duesterhoeft A."/>
            <person name="Fritzc C."/>
            <person name="Holzer E."/>
            <person name="Moestl D."/>
            <person name="Hilbert H."/>
            <person name="Borzym K."/>
            <person name="Langer I."/>
            <person name="Beck A."/>
            <person name="Lehrach H."/>
            <person name="Reinhardt R."/>
            <person name="Pohl T.M."/>
            <person name="Eger P."/>
            <person name="Zimmermann W."/>
            <person name="Wedler H."/>
            <person name="Wambutt R."/>
            <person name="Purnelle B."/>
            <person name="Goffeau A."/>
            <person name="Cadieu E."/>
            <person name="Dreano S."/>
            <person name="Gloux S."/>
            <person name="Lelaure V."/>
            <person name="Mottier S."/>
            <person name="Galibert F."/>
            <person name="Aves S.J."/>
            <person name="Xiang Z."/>
            <person name="Hunt C."/>
            <person name="Moore K."/>
            <person name="Hurst S.M."/>
            <person name="Lucas M."/>
            <person name="Rochet M."/>
            <person name="Gaillardin C."/>
            <person name="Tallada V.A."/>
            <person name="Garzon A."/>
            <person name="Thode G."/>
            <person name="Daga R.R."/>
            <person name="Cruzado L."/>
            <person name="Jimenez J."/>
            <person name="Sanchez M."/>
            <person name="del Rey F."/>
            <person name="Benito J."/>
            <person name="Dominguez A."/>
            <person name="Revuelta J.L."/>
            <person name="Moreno S."/>
            <person name="Armstrong J."/>
            <person name="Forsburg S.L."/>
            <person name="Cerutti L."/>
            <person name="Lowe T."/>
            <person name="McCombie W.R."/>
            <person name="Paulsen I."/>
            <person name="Potashkin J."/>
            <person name="Shpakovski G.V."/>
            <person name="Ussery D."/>
            <person name="Barrell B.G."/>
            <person name="Nurse P."/>
        </authorList>
    </citation>
    <scope>NUCLEOTIDE SEQUENCE [LARGE SCALE GENOMIC DNA]</scope>
    <source>
        <strain>972 / ATCC 24843</strain>
    </source>
</reference>
<reference key="2">
    <citation type="journal article" date="2002" name="Nucleic Acids Res.">
        <title>Characterization of the fission yeast ribosomal DNA binding factor: components share homology with upstream activating factor and with SWI/SNF subunits.</title>
        <authorList>
            <person name="Liu M."/>
            <person name="Guo A."/>
            <person name="Boukhgalter B."/>
            <person name="Van Den Heuvel K."/>
            <person name="Tripp M."/>
            <person name="Pape L."/>
        </authorList>
    </citation>
    <scope>FUNCTION</scope>
    <scope>IDENTIFICATION IN THE UAF COMPLEX</scope>
    <scope>INTERACTION WITH RRN5 AND SPP27/UAF30</scope>
</reference>
<reference key="3">
    <citation type="journal article" date="2006" name="Nat. Biotechnol.">
        <title>ORFeome cloning and global analysis of protein localization in the fission yeast Schizosaccharomyces pombe.</title>
        <authorList>
            <person name="Matsuyama A."/>
            <person name="Arai R."/>
            <person name="Yashiroda Y."/>
            <person name="Shirai A."/>
            <person name="Kamata A."/>
            <person name="Sekido S."/>
            <person name="Kobayashi Y."/>
            <person name="Hashimoto A."/>
            <person name="Hamamoto M."/>
            <person name="Hiraoka Y."/>
            <person name="Horinouchi S."/>
            <person name="Yoshida M."/>
        </authorList>
    </citation>
    <scope>SUBCELLULAR LOCATION [LARGE SCALE ANALYSIS]</scope>
</reference>
<comment type="function">
    <text evidence="1">Component of the UAF (upstream activation factor) complex which interacts with the upstream element of the RNA polymerase I promoter and forms a stable preinitiation complex. UAF seems to stimulate basal transcription to a fully activated level.</text>
</comment>
<comment type="subunit">
    <text evidence="1">Component of the UAF (upstream activation factor) complex which consists of spp27/uaf30, rrn5, rrn10, and histones H3 and H4. Interacts with rrn5 and spp27/uaf30.</text>
</comment>
<comment type="subcellular location">
    <subcellularLocation>
        <location evidence="2">Cytoplasm</location>
    </subcellularLocation>
    <subcellularLocation>
        <location evidence="2">Nucleus</location>
        <location evidence="2">Nucleolus</location>
    </subcellularLocation>
</comment>
<proteinExistence type="evidence at protein level"/>